<comment type="function">
    <text evidence="5 6">In vitro, has activity towards 2,2'-azino-bis(3-ethylbenzthiazoline-6-sulfonic acid) (ABTS), 2,6-dimethoxy-phenol, and guaiacol (PubMed:34116754). Although brown rot fungi preferentially degrade hemicellulose and cellulose, the enzyme may contribute to generating small amounts of lignin breakdown products required for catalytic reactions (PubMed:34116754).</text>
</comment>
<comment type="catalytic activity">
    <reaction evidence="5">
        <text>4 hydroquinone + O2 = 4 benzosemiquinone + 2 H2O</text>
        <dbReference type="Rhea" id="RHEA:11276"/>
        <dbReference type="ChEBI" id="CHEBI:15377"/>
        <dbReference type="ChEBI" id="CHEBI:15379"/>
        <dbReference type="ChEBI" id="CHEBI:17594"/>
        <dbReference type="ChEBI" id="CHEBI:17977"/>
        <dbReference type="EC" id="1.10.3.2"/>
    </reaction>
</comment>
<comment type="cofactor">
    <cofactor evidence="8">
        <name>Cu cation</name>
        <dbReference type="ChEBI" id="CHEBI:23378"/>
    </cofactor>
    <text evidence="2">Binds 4 Cu cations per monomer.</text>
</comment>
<comment type="activity regulation">
    <text evidence="5">Inhibited by chloride ions (PubMed:34116754). Inhibited by citrate (PubMed:34116754). Inhibited by oxalate (PubMed:34116754). Activated by acetate (PubMed:34116754).</text>
</comment>
<comment type="biophysicochemical properties">
    <kinetics>
        <KM evidence="5">20.1 uM for 2,2'-azino-bis(3-ethylbenzthiazoline-6-sulfonic acid) (ABTS) (at pH 3.0 and 30 degrees Celsius)</KM>
        <KM evidence="5">22.4 uM for 2,2'-azino-bis(3-ethylbenzthiazoline-6-sulfonic acid) (ABTS) (at pH 5.0 and 30 degrees Celsius)</KM>
        <KM evidence="5">64.4 uM for 2,6-dimethoxy-phenol (at pH 3.0 and 30 degrees Celsius)</KM>
        <KM evidence="5">8 uM for 2,6-dimethoxy-phenol (at pH 5.0 and 30 degrees Celsius)</KM>
        <KM evidence="5">1790 uM for guaiacol (at pH 3.0 and 30 degrees Celsius)</KM>
        <KM evidence="5">918 uM for guaiacol (at pH 5.0 and 30 degrees Celsius)</KM>
        <text>kcat is 315 sec(-1) with 2,2'-azino-bis(3-ethylbenzthiazoline-6-sulfonic acid) (ABTS) as substrate (at pH 3.0 and 30 degrees Celsius). kcat is 42.6 sec(-1) with 2,2'-azino-bis(3-ethylbenzthiazoline-6-sulfonic acid) (ABTS) as substrate (at pH 5.0 and 30 degrees Celsius). kcat is 155 sec(-1) with 2,6-dimethoxy-phenol as substrate (at pH 3.0 and 30 degrees Celsius). kcat is 14.8 sec(-1) with 2,6-dimethoxy-phenol as substrate (at pH 5.0 and 30 degrees Celsius). cat is 48 sec(-1) with guaiacol as substrate (at pH 3.0 and 30 degrees Celsius). kcat is 16.7 sec(-1) with guaiacol as substrate (at pH 5.0 and 30 degrees Celsius).</text>
    </kinetics>
    <phDependence>
        <text>Optimum pH is 2.5 or below with 2,2'-azino-bis(3-ethylbenzthiazoline-6-sulfonic acid) (ABTS) or 2,6-dimethoxy-phenol as substrate, and 3.5 with guaiacol as substrate.</text>
    </phDependence>
</comment>
<comment type="subcellular location">
    <subcellularLocation>
        <location evidence="5">Secreted</location>
    </subcellularLocation>
</comment>
<comment type="induction">
    <text evidence="5">Expressed during growth on spruce wood (at protein level).</text>
</comment>
<comment type="similarity">
    <text evidence="7">Belongs to the multicopper oxidase family.</text>
</comment>
<dbReference type="EC" id="1.10.3.2" evidence="5"/>
<dbReference type="EMBL" id="KE504147">
    <property type="protein sequence ID" value="EPT00641.1"/>
    <property type="molecule type" value="Genomic_DNA"/>
</dbReference>
<dbReference type="SMR" id="S8FGV1"/>
<dbReference type="STRING" id="743788.S8FGV1"/>
<dbReference type="GlyCosmos" id="S8FGV1">
    <property type="glycosylation" value="10 sites, No reported glycans"/>
</dbReference>
<dbReference type="eggNOG" id="KOG1263">
    <property type="taxonomic scope" value="Eukaryota"/>
</dbReference>
<dbReference type="HOGENOM" id="CLU_006504_2_1_1"/>
<dbReference type="InParanoid" id="S8FGV1"/>
<dbReference type="OrthoDB" id="2121828at2759"/>
<dbReference type="Proteomes" id="UP000015241">
    <property type="component" value="Unassembled WGS sequence"/>
</dbReference>
<dbReference type="GO" id="GO:0005576">
    <property type="term" value="C:extracellular region"/>
    <property type="evidence" value="ECO:0007669"/>
    <property type="project" value="UniProtKB-SubCell"/>
</dbReference>
<dbReference type="GO" id="GO:0005507">
    <property type="term" value="F:copper ion binding"/>
    <property type="evidence" value="ECO:0007669"/>
    <property type="project" value="InterPro"/>
</dbReference>
<dbReference type="GO" id="GO:0016682">
    <property type="term" value="F:oxidoreductase activity, acting on diphenols and related substances as donors, oxygen as acceptor"/>
    <property type="evidence" value="ECO:0000314"/>
    <property type="project" value="UniProtKB"/>
</dbReference>
<dbReference type="CDD" id="cd13856">
    <property type="entry name" value="CuRO_1_Tv-LCC_like"/>
    <property type="match status" value="1"/>
</dbReference>
<dbReference type="CDD" id="cd13903">
    <property type="entry name" value="CuRO_3_Tv-LCC_like"/>
    <property type="match status" value="1"/>
</dbReference>
<dbReference type="FunFam" id="2.60.40.420:FF:000045">
    <property type="entry name" value="Laccase 2"/>
    <property type="match status" value="1"/>
</dbReference>
<dbReference type="Gene3D" id="2.60.40.420">
    <property type="entry name" value="Cupredoxins - blue copper proteins"/>
    <property type="match status" value="3"/>
</dbReference>
<dbReference type="InterPro" id="IPR011707">
    <property type="entry name" value="Cu-oxidase-like_N"/>
</dbReference>
<dbReference type="InterPro" id="IPR001117">
    <property type="entry name" value="Cu-oxidase_2nd"/>
</dbReference>
<dbReference type="InterPro" id="IPR011706">
    <property type="entry name" value="Cu-oxidase_C"/>
</dbReference>
<dbReference type="InterPro" id="IPR045087">
    <property type="entry name" value="Cu-oxidase_fam"/>
</dbReference>
<dbReference type="InterPro" id="IPR033138">
    <property type="entry name" value="Cu_oxidase_CS"/>
</dbReference>
<dbReference type="InterPro" id="IPR008972">
    <property type="entry name" value="Cupredoxin"/>
</dbReference>
<dbReference type="PANTHER" id="PTHR11709:SF394">
    <property type="entry name" value="FI03373P-RELATED"/>
    <property type="match status" value="1"/>
</dbReference>
<dbReference type="PANTHER" id="PTHR11709">
    <property type="entry name" value="MULTI-COPPER OXIDASE"/>
    <property type="match status" value="1"/>
</dbReference>
<dbReference type="Pfam" id="PF00394">
    <property type="entry name" value="Cu-oxidase"/>
    <property type="match status" value="1"/>
</dbReference>
<dbReference type="Pfam" id="PF07731">
    <property type="entry name" value="Cu-oxidase_2"/>
    <property type="match status" value="1"/>
</dbReference>
<dbReference type="Pfam" id="PF07732">
    <property type="entry name" value="Cu-oxidase_3"/>
    <property type="match status" value="1"/>
</dbReference>
<dbReference type="SUPFAM" id="SSF49503">
    <property type="entry name" value="Cupredoxins"/>
    <property type="match status" value="3"/>
</dbReference>
<dbReference type="PROSITE" id="PS00079">
    <property type="entry name" value="MULTICOPPER_OXIDASE1"/>
    <property type="match status" value="1"/>
</dbReference>
<reference evidence="10" key="1">
    <citation type="journal article" date="2012" name="Science">
        <title>The Paleozoic origin of enzymatic lignin decomposition reconstructed from 31 fungal genomes.</title>
        <authorList>
            <person name="Floudas D."/>
            <person name="Binder M."/>
            <person name="Riley R."/>
            <person name="Barry K."/>
            <person name="Blanchette R.A."/>
            <person name="Henrissat B."/>
            <person name="Martinez A.T."/>
            <person name="Otillar R."/>
            <person name="Spatafora J.W."/>
            <person name="Yadav J.S."/>
            <person name="Aerts A."/>
            <person name="Benoit I."/>
            <person name="Boyd A."/>
            <person name="Carlson A."/>
            <person name="Copeland A."/>
            <person name="Coutinho P.M."/>
            <person name="de Vries R.P."/>
            <person name="Ferreira P."/>
            <person name="Findley K."/>
            <person name="Foster B."/>
            <person name="Gaskell J."/>
            <person name="Glotzer D."/>
            <person name="Gorecki P."/>
            <person name="Heitman J."/>
            <person name="Hesse C."/>
            <person name="Hori C."/>
            <person name="Igarashi K."/>
            <person name="Jurgens J.A."/>
            <person name="Kallen N."/>
            <person name="Kersten P."/>
            <person name="Kohler A."/>
            <person name="Kuees U."/>
            <person name="Kumar T.K.A."/>
            <person name="Kuo A."/>
            <person name="LaButti K."/>
            <person name="Larrondo L.F."/>
            <person name="Lindquist E."/>
            <person name="Ling A."/>
            <person name="Lombard V."/>
            <person name="Lucas S."/>
            <person name="Lundell T."/>
            <person name="Martin R."/>
            <person name="McLaughlin D.J."/>
            <person name="Morgenstern I."/>
            <person name="Morin E."/>
            <person name="Murat C."/>
            <person name="Nagy L.G."/>
            <person name="Nolan M."/>
            <person name="Ohm R.A."/>
            <person name="Patyshakuliyeva A."/>
            <person name="Rokas A."/>
            <person name="Ruiz-Duenas F.J."/>
            <person name="Sabat G."/>
            <person name="Salamov A."/>
            <person name="Samejima M."/>
            <person name="Schmutz J."/>
            <person name="Slot J.C."/>
            <person name="St John F."/>
            <person name="Stenlid J."/>
            <person name="Sun H."/>
            <person name="Sun S."/>
            <person name="Syed K."/>
            <person name="Tsang A."/>
            <person name="Wiebenga A."/>
            <person name="Young D."/>
            <person name="Pisabarro A."/>
            <person name="Eastwood D.C."/>
            <person name="Martin F."/>
            <person name="Cullen D."/>
            <person name="Grigoriev I.V."/>
            <person name="Hibbett D.S."/>
        </authorList>
    </citation>
    <scope>NUCLEOTIDE SEQUENCE [GENOMIC DNA]</scope>
    <source>
        <strain evidence="10">FP-58527</strain>
    </source>
</reference>
<reference evidence="7" key="2">
    <citation type="journal article" date="2021" name="Enzyme Microb. Technol.">
        <title>Functional expression and characterization of two laccases from the brown rot Fomitopsis pinicola.</title>
        <authorList>
            <person name="Csarman F."/>
            <person name="Obermann T."/>
            <person name="Zanjko M.C."/>
            <person name="Man P."/>
            <person name="Halada P."/>
            <person name="Seiboth B."/>
            <person name="Ludwig R."/>
        </authorList>
    </citation>
    <scope>FUNCTION</scope>
    <scope>CATALYTIC ACTIVITY</scope>
    <scope>COFACTOR</scope>
    <scope>ACTIVITY REGULATION</scope>
    <scope>BIOPHYSICOCHEMICAL PROPERTIES</scope>
    <scope>SUBCELLULAR LOCATION</scope>
    <scope>INDUCTION</scope>
</reference>
<feature type="signal peptide" evidence="3">
    <location>
        <begin position="1"/>
        <end position="23"/>
    </location>
</feature>
<feature type="chain" id="PRO_5004563660" description="Laccase-2" evidence="3">
    <location>
        <begin position="24"/>
        <end position="530"/>
    </location>
</feature>
<feature type="domain" description="Plastocyanin-like 1" evidence="3">
    <location>
        <begin position="36"/>
        <end position="154"/>
    </location>
</feature>
<feature type="domain" description="Plastocyanin-like 2" evidence="3">
    <location>
        <begin position="167"/>
        <end position="311"/>
    </location>
</feature>
<feature type="domain" description="Plastocyanin-like 3" evidence="3">
    <location>
        <begin position="379"/>
        <end position="504"/>
    </location>
</feature>
<feature type="binding site" description="type 2 copper site" evidence="1">
    <location>
        <position position="88"/>
    </location>
    <ligand>
        <name>Cu cation</name>
        <dbReference type="ChEBI" id="CHEBI:23378"/>
        <label>1</label>
    </ligand>
</feature>
<feature type="binding site" description="type 3 copper site" evidence="1">
    <location>
        <position position="90"/>
    </location>
    <ligand>
        <name>Cu cation</name>
        <dbReference type="ChEBI" id="CHEBI:23378"/>
        <label>2</label>
    </ligand>
</feature>
<feature type="binding site" description="type 3 copper site" evidence="1">
    <location>
        <position position="133"/>
    </location>
    <ligand>
        <name>Cu cation</name>
        <dbReference type="ChEBI" id="CHEBI:23378"/>
        <label>2</label>
    </ligand>
</feature>
<feature type="binding site" description="type 3 copper site" evidence="1">
    <location>
        <position position="135"/>
    </location>
    <ligand>
        <name>Cu cation</name>
        <dbReference type="ChEBI" id="CHEBI:23378"/>
        <label>3</label>
    </ligand>
</feature>
<feature type="binding site" description="type 1 copper site" evidence="1">
    <location>
        <position position="428"/>
    </location>
    <ligand>
        <name>Cu cation</name>
        <dbReference type="ChEBI" id="CHEBI:23378"/>
        <label>4</label>
    </ligand>
</feature>
<feature type="binding site" description="type 2 copper site" evidence="1">
    <location>
        <position position="431"/>
    </location>
    <ligand>
        <name>Cu cation</name>
        <dbReference type="ChEBI" id="CHEBI:23378"/>
        <label>1</label>
    </ligand>
</feature>
<feature type="binding site" description="type 3 copper site" evidence="1">
    <location>
        <position position="433"/>
    </location>
    <ligand>
        <name>Cu cation</name>
        <dbReference type="ChEBI" id="CHEBI:23378"/>
        <label>3</label>
    </ligand>
</feature>
<feature type="binding site" description="type 3 copper site" evidence="1">
    <location>
        <position position="484"/>
    </location>
    <ligand>
        <name>Cu cation</name>
        <dbReference type="ChEBI" id="CHEBI:23378"/>
        <label>3</label>
    </ligand>
</feature>
<feature type="binding site" description="type 1 copper site" evidence="1">
    <location>
        <position position="485"/>
    </location>
    <ligand>
        <name>Cu cation</name>
        <dbReference type="ChEBI" id="CHEBI:23378"/>
        <label>4</label>
    </ligand>
</feature>
<feature type="binding site" description="type 3 copper site" evidence="1">
    <location>
        <position position="486"/>
    </location>
    <ligand>
        <name>Cu cation</name>
        <dbReference type="ChEBI" id="CHEBI:23378"/>
        <label>2</label>
    </ligand>
</feature>
<feature type="binding site" description="type 1 copper site" evidence="1">
    <location>
        <position position="490"/>
    </location>
    <ligand>
        <name>Cu cation</name>
        <dbReference type="ChEBI" id="CHEBI:23378"/>
        <label>4</label>
    </ligand>
</feature>
<feature type="glycosylation site" description="N-linked (GlcNAc...) asparagine" evidence="4">
    <location>
        <position position="82"/>
    </location>
</feature>
<feature type="glycosylation site" description="N-linked (GlcNAc...) asparagine" evidence="4">
    <location>
        <position position="120"/>
    </location>
</feature>
<feature type="glycosylation site" description="N-linked (GlcNAc...) asparagine" evidence="4">
    <location>
        <position position="191"/>
    </location>
</feature>
<feature type="glycosylation site" description="N-linked (GlcNAc...) asparagine" evidence="4">
    <location>
        <position position="240"/>
    </location>
</feature>
<feature type="glycosylation site" description="N-linked (GlcNAc...) asparagine" evidence="4">
    <location>
        <position position="292"/>
    </location>
</feature>
<feature type="glycosylation site" description="N-linked (GlcNAc...) asparagine" evidence="4">
    <location>
        <position position="311"/>
    </location>
</feature>
<feature type="glycosylation site" description="N-linked (GlcNAc...) asparagine" evidence="4">
    <location>
        <position position="366"/>
    </location>
</feature>
<feature type="glycosylation site" description="N-linked (GlcNAc...) asparagine" evidence="4">
    <location>
        <position position="375"/>
    </location>
</feature>
<feature type="glycosylation site" description="N-linked (GlcNAc...) asparagine" evidence="4">
    <location>
        <position position="392"/>
    </location>
</feature>
<feature type="glycosylation site" description="N-linked (GlcNAc...) asparagine" evidence="4">
    <location>
        <position position="412"/>
    </location>
</feature>
<feature type="disulfide bond" evidence="2">
    <location>
        <begin position="109"/>
        <end position="520"/>
    </location>
</feature>
<feature type="disulfide bond" evidence="1">
    <location>
        <begin position="141"/>
        <end position="228"/>
    </location>
</feature>
<evidence type="ECO:0000250" key="1">
    <source>
        <dbReference type="UniProtKB" id="D0VWU3"/>
    </source>
</evidence>
<evidence type="ECO:0000250" key="2">
    <source>
        <dbReference type="UniProtKB" id="Q70KY3"/>
    </source>
</evidence>
<evidence type="ECO:0000255" key="3"/>
<evidence type="ECO:0000255" key="4">
    <source>
        <dbReference type="PROSITE-ProRule" id="PRU00498"/>
    </source>
</evidence>
<evidence type="ECO:0000269" key="5">
    <source>
    </source>
</evidence>
<evidence type="ECO:0000303" key="6">
    <source>
    </source>
</evidence>
<evidence type="ECO:0000305" key="7"/>
<evidence type="ECO:0000305" key="8">
    <source>
    </source>
</evidence>
<evidence type="ECO:0000312" key="9">
    <source>
        <dbReference type="EMBL" id="EPT00641.1"/>
    </source>
</evidence>
<evidence type="ECO:0000312" key="10">
    <source>
        <dbReference type="Proteomes" id="UP000015241"/>
    </source>
</evidence>
<keyword id="KW-0186">Copper</keyword>
<keyword id="KW-1015">Disulfide bond</keyword>
<keyword id="KW-0325">Glycoprotein</keyword>
<keyword id="KW-0479">Metal-binding</keyword>
<keyword id="KW-0560">Oxidoreductase</keyword>
<keyword id="KW-1185">Reference proteome</keyword>
<keyword id="KW-0677">Repeat</keyword>
<keyword id="KW-0964">Secreted</keyword>
<keyword id="KW-0732">Signal</keyword>
<proteinExistence type="evidence at protein level"/>
<sequence length="530" mass="58324">MLLSSAFVGSCLAILNFAAAVSAQGGLSRTTLNIVNKVISPDGYSRDSVLANGIHPGPLISGNKGDTFQINVNNQLHDNSMNTSTTVHWHGIDQHHTNWADGPAFVTQCPIVPEHSFLYNFTVPDQAGTFWYHSHESVQYCDGLRGPLVVYDPEDPHKDLYDVDDDTTIISLSDWYHSPAHELLPGPIPPNSTLINSLGRPDGSDLPVTIIEVDPTKRYRFRLISMACHPYFDFSIDGHNMTIIEADGSNTEPLSDIDQIRIYPAQRYSFVLEPNQTPGDYWIRAAPLQLGNTSNPDTTTSLGLAILRYTNRSGYAQAASVDPYDISQTPIPVNPLLEQNLHAYGDVPELDEECDDCKLTFDFAFNFTAVDFTVNGTSYVNPTVPVLLQILNGTYTAQELLPHHSVYTLPRNKTIEITMPGAVTGGPHPMHLHGHSFYVIQSMGSDTTNTVNPVLRDTVAVGGATGDNVVIRFRTDNPGPWIMHCHIDFHLALGFAVVLAEAPQDVAEYVSPIPTWDELCPIWDNAPSHN</sequence>
<name>LAC2_FOMSC</name>
<organism evidence="10">
    <name type="scientific">Fomitopsis schrenkii</name>
    <name type="common">Brown rot fungus</name>
    <dbReference type="NCBI Taxonomy" id="2126942"/>
    <lineage>
        <taxon>Eukaryota</taxon>
        <taxon>Fungi</taxon>
        <taxon>Dikarya</taxon>
        <taxon>Basidiomycota</taxon>
        <taxon>Agaricomycotina</taxon>
        <taxon>Agaricomycetes</taxon>
        <taxon>Polyporales</taxon>
        <taxon>Fomitopsis</taxon>
    </lineage>
</organism>
<gene>
    <name evidence="6" type="primary">LCC2</name>
    <name evidence="9" type="ORF">FOMPIDRAFT_51906</name>
</gene>
<accession>S8FGV1</accession>
<protein>
    <recommendedName>
        <fullName evidence="6">Laccase-2</fullName>
        <ecNumber evidence="5">1.10.3.2</ecNumber>
    </recommendedName>
    <alternativeName>
        <fullName evidence="6">FpLCC2</fullName>
    </alternativeName>
</protein>